<evidence type="ECO:0000255" key="1">
    <source>
        <dbReference type="HAMAP-Rule" id="MF_01820"/>
    </source>
</evidence>
<evidence type="ECO:0000255" key="2">
    <source>
        <dbReference type="PROSITE-ProRule" id="PRU01058"/>
    </source>
</evidence>
<gene>
    <name evidence="1" type="primary">rsgA</name>
    <name type="ordered locus">NE0078</name>
</gene>
<name>RSGA_NITEU</name>
<proteinExistence type="inferred from homology"/>
<protein>
    <recommendedName>
        <fullName evidence="1">Small ribosomal subunit biogenesis GTPase RsgA</fullName>
        <ecNumber evidence="1">3.6.1.-</ecNumber>
    </recommendedName>
</protein>
<reference key="1">
    <citation type="journal article" date="2003" name="J. Bacteriol.">
        <title>Complete genome sequence of the ammonia-oxidizing bacterium and obligate chemolithoautotroph Nitrosomonas europaea.</title>
        <authorList>
            <person name="Chain P."/>
            <person name="Lamerdin J.E."/>
            <person name="Larimer F.W."/>
            <person name="Regala W."/>
            <person name="Lao V."/>
            <person name="Land M.L."/>
            <person name="Hauser L."/>
            <person name="Hooper A.B."/>
            <person name="Klotz M.G."/>
            <person name="Norton J."/>
            <person name="Sayavedra-Soto L.A."/>
            <person name="Arciero D.M."/>
            <person name="Hommes N.G."/>
            <person name="Whittaker M.M."/>
            <person name="Arp D.J."/>
        </authorList>
    </citation>
    <scope>NUCLEOTIDE SEQUENCE [LARGE SCALE GENOMIC DNA]</scope>
    <source>
        <strain>ATCC 19718 / CIP 103999 / KCTC 2705 / NBRC 14298</strain>
    </source>
</reference>
<sequence>MSVGADRKKTGTSLTGKVVAAYGRHFEVEVAGGTIYSCVVRGKKKGVVCGDEVEILPATGDQGIIETTLPRTSLFYRSEIFREKLIAANATQLVFVLAVVPSCNLELLDRCLVAAESQGIRPLILLNKIDLIGQDEQRQAVAHHLMFYRELGYPVLEISAKISVQPLIPLLSGQTSLLAGQSGVGKSTLLNALVPRAQQATAEISDALDSGRHTTTHVRLFHFDADSSIIDSPGFQEFGLQQLDEASLARGFIEFRPFLGQCKFRDCRHIAEPGCKLLLAAQEGMLNSRRIACYHKLVKGLKKSHPWMETNKRV</sequence>
<comment type="function">
    <text evidence="1">One of several proteins that assist in the late maturation steps of the functional core of the 30S ribosomal subunit. Helps release RbfA from mature subunits. May play a role in the assembly of ribosomal proteins into the subunit. Circularly permuted GTPase that catalyzes slow GTP hydrolysis, GTPase activity is stimulated by the 30S ribosomal subunit.</text>
</comment>
<comment type="cofactor">
    <cofactor evidence="1">
        <name>Zn(2+)</name>
        <dbReference type="ChEBI" id="CHEBI:29105"/>
    </cofactor>
    <text evidence="1">Binds 1 zinc ion per subunit.</text>
</comment>
<comment type="subunit">
    <text evidence="1">Monomer. Associates with 30S ribosomal subunit, binds 16S rRNA.</text>
</comment>
<comment type="subcellular location">
    <subcellularLocation>
        <location evidence="1">Cytoplasm</location>
    </subcellularLocation>
</comment>
<comment type="similarity">
    <text evidence="1">Belongs to the TRAFAC class YlqF/YawG GTPase family. RsgA subfamily.</text>
</comment>
<organism>
    <name type="scientific">Nitrosomonas europaea (strain ATCC 19718 / CIP 103999 / KCTC 2705 / NBRC 14298)</name>
    <dbReference type="NCBI Taxonomy" id="228410"/>
    <lineage>
        <taxon>Bacteria</taxon>
        <taxon>Pseudomonadati</taxon>
        <taxon>Pseudomonadota</taxon>
        <taxon>Betaproteobacteria</taxon>
        <taxon>Nitrosomonadales</taxon>
        <taxon>Nitrosomonadaceae</taxon>
        <taxon>Nitrosomonas</taxon>
    </lineage>
</organism>
<feature type="chain" id="PRO_0000171500" description="Small ribosomal subunit biogenesis GTPase RsgA">
    <location>
        <begin position="1"/>
        <end position="314"/>
    </location>
</feature>
<feature type="domain" description="CP-type G" evidence="2">
    <location>
        <begin position="78"/>
        <end position="238"/>
    </location>
</feature>
<feature type="binding site" evidence="1">
    <location>
        <begin position="127"/>
        <end position="130"/>
    </location>
    <ligand>
        <name>GTP</name>
        <dbReference type="ChEBI" id="CHEBI:37565"/>
    </ligand>
</feature>
<feature type="binding site" evidence="1">
    <location>
        <begin position="180"/>
        <end position="188"/>
    </location>
    <ligand>
        <name>GTP</name>
        <dbReference type="ChEBI" id="CHEBI:37565"/>
    </ligand>
</feature>
<feature type="binding site" evidence="1">
    <location>
        <position position="262"/>
    </location>
    <ligand>
        <name>Zn(2+)</name>
        <dbReference type="ChEBI" id="CHEBI:29105"/>
    </ligand>
</feature>
<feature type="binding site" evidence="1">
    <location>
        <position position="267"/>
    </location>
    <ligand>
        <name>Zn(2+)</name>
        <dbReference type="ChEBI" id="CHEBI:29105"/>
    </ligand>
</feature>
<feature type="binding site" evidence="1">
    <location>
        <position position="269"/>
    </location>
    <ligand>
        <name>Zn(2+)</name>
        <dbReference type="ChEBI" id="CHEBI:29105"/>
    </ligand>
</feature>
<feature type="binding site" evidence="1">
    <location>
        <position position="275"/>
    </location>
    <ligand>
        <name>Zn(2+)</name>
        <dbReference type="ChEBI" id="CHEBI:29105"/>
    </ligand>
</feature>
<keyword id="KW-0963">Cytoplasm</keyword>
<keyword id="KW-0342">GTP-binding</keyword>
<keyword id="KW-0378">Hydrolase</keyword>
<keyword id="KW-0479">Metal-binding</keyword>
<keyword id="KW-0547">Nucleotide-binding</keyword>
<keyword id="KW-1185">Reference proteome</keyword>
<keyword id="KW-0690">Ribosome biogenesis</keyword>
<keyword id="KW-0694">RNA-binding</keyword>
<keyword id="KW-0699">rRNA-binding</keyword>
<keyword id="KW-0862">Zinc</keyword>
<dbReference type="EC" id="3.6.1.-" evidence="1"/>
<dbReference type="EMBL" id="AL954747">
    <property type="protein sequence ID" value="CAD83989.1"/>
    <property type="molecule type" value="Genomic_DNA"/>
</dbReference>
<dbReference type="RefSeq" id="WP_011110730.1">
    <property type="nucleotide sequence ID" value="NC_004757.1"/>
</dbReference>
<dbReference type="SMR" id="Q82Y12"/>
<dbReference type="STRING" id="228410.NE0078"/>
<dbReference type="GeneID" id="87103292"/>
<dbReference type="KEGG" id="neu:NE0078"/>
<dbReference type="eggNOG" id="COG1162">
    <property type="taxonomic scope" value="Bacteria"/>
</dbReference>
<dbReference type="HOGENOM" id="CLU_033617_2_0_4"/>
<dbReference type="OrthoDB" id="9809485at2"/>
<dbReference type="PhylomeDB" id="Q82Y12"/>
<dbReference type="Proteomes" id="UP000001416">
    <property type="component" value="Chromosome"/>
</dbReference>
<dbReference type="GO" id="GO:0005737">
    <property type="term" value="C:cytoplasm"/>
    <property type="evidence" value="ECO:0007669"/>
    <property type="project" value="UniProtKB-SubCell"/>
</dbReference>
<dbReference type="GO" id="GO:0005525">
    <property type="term" value="F:GTP binding"/>
    <property type="evidence" value="ECO:0007669"/>
    <property type="project" value="UniProtKB-UniRule"/>
</dbReference>
<dbReference type="GO" id="GO:0003924">
    <property type="term" value="F:GTPase activity"/>
    <property type="evidence" value="ECO:0007669"/>
    <property type="project" value="UniProtKB-UniRule"/>
</dbReference>
<dbReference type="GO" id="GO:0046872">
    <property type="term" value="F:metal ion binding"/>
    <property type="evidence" value="ECO:0007669"/>
    <property type="project" value="UniProtKB-KW"/>
</dbReference>
<dbReference type="GO" id="GO:0019843">
    <property type="term" value="F:rRNA binding"/>
    <property type="evidence" value="ECO:0007669"/>
    <property type="project" value="UniProtKB-KW"/>
</dbReference>
<dbReference type="GO" id="GO:0042274">
    <property type="term" value="P:ribosomal small subunit biogenesis"/>
    <property type="evidence" value="ECO:0007669"/>
    <property type="project" value="UniProtKB-UniRule"/>
</dbReference>
<dbReference type="CDD" id="cd04466">
    <property type="entry name" value="S1_YloQ_GTPase"/>
    <property type="match status" value="1"/>
</dbReference>
<dbReference type="CDD" id="cd01854">
    <property type="entry name" value="YjeQ_EngC"/>
    <property type="match status" value="1"/>
</dbReference>
<dbReference type="Gene3D" id="2.40.50.140">
    <property type="entry name" value="Nucleic acid-binding proteins"/>
    <property type="match status" value="1"/>
</dbReference>
<dbReference type="Gene3D" id="3.40.50.300">
    <property type="entry name" value="P-loop containing nucleotide triphosphate hydrolases"/>
    <property type="match status" value="1"/>
</dbReference>
<dbReference type="Gene3D" id="1.10.40.50">
    <property type="entry name" value="Probable gtpase engc, domain 3"/>
    <property type="match status" value="1"/>
</dbReference>
<dbReference type="HAMAP" id="MF_01820">
    <property type="entry name" value="GTPase_RsgA"/>
    <property type="match status" value="1"/>
</dbReference>
<dbReference type="InterPro" id="IPR030378">
    <property type="entry name" value="G_CP_dom"/>
</dbReference>
<dbReference type="InterPro" id="IPR012340">
    <property type="entry name" value="NA-bd_OB-fold"/>
</dbReference>
<dbReference type="InterPro" id="IPR027417">
    <property type="entry name" value="P-loop_NTPase"/>
</dbReference>
<dbReference type="InterPro" id="IPR004881">
    <property type="entry name" value="Ribosome_biogen_GTPase_RsgA"/>
</dbReference>
<dbReference type="InterPro" id="IPR010914">
    <property type="entry name" value="RsgA_GTPase_dom"/>
</dbReference>
<dbReference type="InterPro" id="IPR031944">
    <property type="entry name" value="RsgA_N"/>
</dbReference>
<dbReference type="NCBIfam" id="TIGR00157">
    <property type="entry name" value="ribosome small subunit-dependent GTPase A"/>
    <property type="match status" value="1"/>
</dbReference>
<dbReference type="PANTHER" id="PTHR32120">
    <property type="entry name" value="SMALL RIBOSOMAL SUBUNIT BIOGENESIS GTPASE RSGA"/>
    <property type="match status" value="1"/>
</dbReference>
<dbReference type="PANTHER" id="PTHR32120:SF11">
    <property type="entry name" value="SMALL RIBOSOMAL SUBUNIT BIOGENESIS GTPASE RSGA 1, MITOCHONDRIAL-RELATED"/>
    <property type="match status" value="1"/>
</dbReference>
<dbReference type="Pfam" id="PF03193">
    <property type="entry name" value="RsgA_GTPase"/>
    <property type="match status" value="1"/>
</dbReference>
<dbReference type="SUPFAM" id="SSF50249">
    <property type="entry name" value="Nucleic acid-binding proteins"/>
    <property type="match status" value="1"/>
</dbReference>
<dbReference type="SUPFAM" id="SSF52540">
    <property type="entry name" value="P-loop containing nucleoside triphosphate hydrolases"/>
    <property type="match status" value="1"/>
</dbReference>
<dbReference type="PROSITE" id="PS50936">
    <property type="entry name" value="ENGC_GTPASE"/>
    <property type="match status" value="1"/>
</dbReference>
<dbReference type="PROSITE" id="PS51721">
    <property type="entry name" value="G_CP"/>
    <property type="match status" value="1"/>
</dbReference>
<accession>Q82Y12</accession>